<accession>D3BAV8</accession>
<protein>
    <recommendedName>
        <fullName evidence="1">Elongation factor Ts, mitochondrial</fullName>
        <shortName evidence="1">EF-Ts</shortName>
        <shortName evidence="1">EF-TsMt</shortName>
    </recommendedName>
</protein>
<name>EFTS_HETP5</name>
<organism>
    <name type="scientific">Heterostelium pallidum (strain ATCC 26659 / Pp 5 / PN500)</name>
    <name type="common">Cellular slime mold</name>
    <name type="synonym">Polysphondylium pallidum</name>
    <dbReference type="NCBI Taxonomy" id="670386"/>
    <lineage>
        <taxon>Eukaryota</taxon>
        <taxon>Amoebozoa</taxon>
        <taxon>Evosea</taxon>
        <taxon>Eumycetozoa</taxon>
        <taxon>Dictyostelia</taxon>
        <taxon>Acytosteliales</taxon>
        <taxon>Acytosteliaceae</taxon>
        <taxon>Heterostelium</taxon>
    </lineage>
</organism>
<proteinExistence type="inferred from homology"/>
<dbReference type="EMBL" id="ADBJ01000025">
    <property type="protein sequence ID" value="EFA81695.1"/>
    <property type="molecule type" value="Genomic_DNA"/>
</dbReference>
<dbReference type="RefSeq" id="XP_020433812.1">
    <property type="nucleotide sequence ID" value="XM_020576563.1"/>
</dbReference>
<dbReference type="SMR" id="D3BAV8"/>
<dbReference type="FunCoup" id="D3BAV8">
    <property type="interactions" value="618"/>
</dbReference>
<dbReference type="STRING" id="670386.D3BAV8"/>
<dbReference type="GeneID" id="31361173"/>
<dbReference type="InParanoid" id="D3BAV8"/>
<dbReference type="OMA" id="QEYMLDD"/>
<dbReference type="Proteomes" id="UP000001396">
    <property type="component" value="Unassembled WGS sequence"/>
</dbReference>
<dbReference type="GO" id="GO:0005739">
    <property type="term" value="C:mitochondrion"/>
    <property type="evidence" value="ECO:0007669"/>
    <property type="project" value="UniProtKB-SubCell"/>
</dbReference>
<dbReference type="GO" id="GO:0003746">
    <property type="term" value="F:translation elongation factor activity"/>
    <property type="evidence" value="ECO:0007669"/>
    <property type="project" value="UniProtKB-UniRule"/>
</dbReference>
<dbReference type="GO" id="GO:0070125">
    <property type="term" value="P:mitochondrial translational elongation"/>
    <property type="evidence" value="ECO:0007669"/>
    <property type="project" value="TreeGrafter"/>
</dbReference>
<dbReference type="CDD" id="cd14275">
    <property type="entry name" value="UBA_EF-Ts"/>
    <property type="match status" value="1"/>
</dbReference>
<dbReference type="FunFam" id="1.10.8.10:FF:000001">
    <property type="entry name" value="Elongation factor Ts"/>
    <property type="match status" value="1"/>
</dbReference>
<dbReference type="Gene3D" id="1.10.8.10">
    <property type="entry name" value="DNA helicase RuvA subunit, C-terminal domain"/>
    <property type="match status" value="1"/>
</dbReference>
<dbReference type="Gene3D" id="3.30.479.20">
    <property type="entry name" value="Elongation factor Ts, dimerisation domain"/>
    <property type="match status" value="2"/>
</dbReference>
<dbReference type="HAMAP" id="MF_00050">
    <property type="entry name" value="EF_Ts"/>
    <property type="match status" value="1"/>
</dbReference>
<dbReference type="InterPro" id="IPR036402">
    <property type="entry name" value="EF-Ts_dimer_sf"/>
</dbReference>
<dbReference type="InterPro" id="IPR001816">
    <property type="entry name" value="Transl_elong_EFTs/EF1B"/>
</dbReference>
<dbReference type="InterPro" id="IPR014039">
    <property type="entry name" value="Transl_elong_EFTs/EF1B_dimer"/>
</dbReference>
<dbReference type="InterPro" id="IPR018101">
    <property type="entry name" value="Transl_elong_Ts_CS"/>
</dbReference>
<dbReference type="InterPro" id="IPR009060">
    <property type="entry name" value="UBA-like_sf"/>
</dbReference>
<dbReference type="NCBIfam" id="TIGR00116">
    <property type="entry name" value="tsf"/>
    <property type="match status" value="1"/>
</dbReference>
<dbReference type="PANTHER" id="PTHR11741">
    <property type="entry name" value="ELONGATION FACTOR TS"/>
    <property type="match status" value="1"/>
</dbReference>
<dbReference type="PANTHER" id="PTHR11741:SF0">
    <property type="entry name" value="ELONGATION FACTOR TS, MITOCHONDRIAL"/>
    <property type="match status" value="1"/>
</dbReference>
<dbReference type="Pfam" id="PF00889">
    <property type="entry name" value="EF_TS"/>
    <property type="match status" value="1"/>
</dbReference>
<dbReference type="SUPFAM" id="SSF54713">
    <property type="entry name" value="Elongation factor Ts (EF-Ts), dimerisation domain"/>
    <property type="match status" value="2"/>
</dbReference>
<dbReference type="SUPFAM" id="SSF46934">
    <property type="entry name" value="UBA-like"/>
    <property type="match status" value="1"/>
</dbReference>
<dbReference type="PROSITE" id="PS01127">
    <property type="entry name" value="EF_TS_2"/>
    <property type="match status" value="1"/>
</dbReference>
<gene>
    <name type="primary">tsfm</name>
    <name type="ORF">PPL_05689</name>
</gene>
<feature type="transit peptide" description="Mitochondrion" evidence="1">
    <location>
        <begin position="1"/>
        <end position="47"/>
    </location>
</feature>
<feature type="chain" id="PRO_0000402323" description="Elongation factor Ts, mitochondrial">
    <location>
        <begin position="48"/>
        <end position="354"/>
    </location>
</feature>
<comment type="function">
    <text evidence="1">Associates with the EF-Tu.GDP complex and induces the exchange of GDP to GTP. It remains bound to the aminoacyl-tRNA.EF-Tu.GTP complex up to the GTP hydrolysis stage on the ribosome.</text>
</comment>
<comment type="subcellular location">
    <subcellularLocation>
        <location evidence="1">Mitochondrion</location>
    </subcellularLocation>
</comment>
<comment type="similarity">
    <text evidence="1">Belongs to the EF-Ts family.</text>
</comment>
<evidence type="ECO:0000255" key="1">
    <source>
        <dbReference type="HAMAP-Rule" id="MF_03135"/>
    </source>
</evidence>
<keyword id="KW-0251">Elongation factor</keyword>
<keyword id="KW-0496">Mitochondrion</keyword>
<keyword id="KW-0648">Protein biosynthesis</keyword>
<keyword id="KW-1185">Reference proteome</keyword>
<keyword id="KW-0809">Transit peptide</keyword>
<sequence length="354" mass="38965">MMRSTLSLLQKCRLPNNNGSLLSFKNNQVVNQTALFSMKSNQQYRFYSTDVKDLAPLIKELRNRTSAPLKDCKEALIQNKNDIEKATSWLHEKGKSTANKFADRAVVEGTISIVVNNGKAVILEMNSETDFVSRGETFRALADQISRATLESNLLAQSLAEIKPDTIAPQPASGSTVADLIVGTVAKLRENIRLRRVHAIDASNQPNTIVAGYAHDPSGTNQFGRLGSLVQLQYEGGQPDIAALNQLARNIAVHIVGVGPSYVSIESVPKVLLDEAIANKRHPNSLYDEVVLLEQKYISGEDNETVKAAVQRISKQLKTNITIKSFVRYSVGEGMEKKVENYGAEVMEKINKAK</sequence>
<reference key="1">
    <citation type="journal article" date="2011" name="Genome Res.">
        <title>Phylogeny-wide analysis of social amoeba genomes highlights ancient origins for complex intercellular communication.</title>
        <authorList>
            <person name="Heidel A.J."/>
            <person name="Lawal H.M."/>
            <person name="Felder M."/>
            <person name="Schilde C."/>
            <person name="Helps N.R."/>
            <person name="Tunggal B."/>
            <person name="Rivero F."/>
            <person name="John U."/>
            <person name="Schleicher M."/>
            <person name="Eichinger L."/>
            <person name="Platzer M."/>
            <person name="Noegel A.A."/>
            <person name="Schaap P."/>
            <person name="Gloeckner G."/>
        </authorList>
    </citation>
    <scope>NUCLEOTIDE SEQUENCE [LARGE SCALE GENOMIC DNA]</scope>
    <source>
        <strain>ATCC 26659 / Pp 5 / PN500</strain>
    </source>
</reference>